<gene>
    <name type="primary">cpyA</name>
    <name type="ORF">TRV_08055</name>
</gene>
<sequence length="543" mass="60657">MKFLTTGLLATAALAAAQEQHVLQAEDGHGQAPQRDASIFDETLQKFQSSLEDGISHFWSEMKTNFKDYLPLISLPKKHTRRPDSEWDHVVRGADIESVWVQGADGEKRREIDGKLHNYDLRVKAVDPSKLGVDPGVKQYSGYLDDNDADKHLFYWFFESRNDPKNDPVVLWLNGGPGCSSLTGLFLELGPATIDKNLKVVSNPYSWNSNASVIFLDQPVNVGFSYSGSSVSDTVAAGKDVYALLTLFFKQFPEYASQDFHISGESYAGHYIPVFAAEILSHKNTNINLKSALIGNGLTDPLTQYPQYRPMACGEGGYPAVLDQGTCRSMDNSLERCLSLIETCYSSESAWVCVPAAMYCNSAILAPYQQTGMNPYDVRTKCEDMASLCYPQLNAITKWLNQESVMQALGVEVQSYESCNSGINRDFLFHGDWMKPYHRLVPSVLEKIPVLIYAGDADFICNWLGNLAWTDALEWPGHKKFAEAKLEDLKIVNNKDKGKKIGQVKSSGNFTFMRIFGAGHMVPLNQPEASLEFFNRWLGGEWH</sequence>
<proteinExistence type="inferred from homology"/>
<dbReference type="EC" id="3.4.16.5"/>
<dbReference type="EMBL" id="ACYE01000509">
    <property type="protein sequence ID" value="EFE37290.1"/>
    <property type="molecule type" value="Genomic_DNA"/>
</dbReference>
<dbReference type="RefSeq" id="XP_003017935.1">
    <property type="nucleotide sequence ID" value="XM_003017889.1"/>
</dbReference>
<dbReference type="SMR" id="D4DLI1"/>
<dbReference type="ESTHER" id="triru-q5j6j0">
    <property type="family name" value="Carboxypeptidase_S10"/>
</dbReference>
<dbReference type="MEROPS" id="S10.001"/>
<dbReference type="GlyCosmos" id="D4DLI1">
    <property type="glycosylation" value="2 sites, No reported glycans"/>
</dbReference>
<dbReference type="GeneID" id="9579811"/>
<dbReference type="KEGG" id="tve:TRV_08055"/>
<dbReference type="HOGENOM" id="CLU_008523_10_4_1"/>
<dbReference type="OrthoDB" id="469at34384"/>
<dbReference type="Proteomes" id="UP000008383">
    <property type="component" value="Unassembled WGS sequence"/>
</dbReference>
<dbReference type="GO" id="GO:0000324">
    <property type="term" value="C:fungal-type vacuole"/>
    <property type="evidence" value="ECO:0007669"/>
    <property type="project" value="TreeGrafter"/>
</dbReference>
<dbReference type="GO" id="GO:0004185">
    <property type="term" value="F:serine-type carboxypeptidase activity"/>
    <property type="evidence" value="ECO:0007669"/>
    <property type="project" value="UniProtKB-EC"/>
</dbReference>
<dbReference type="GO" id="GO:0006508">
    <property type="term" value="P:proteolysis"/>
    <property type="evidence" value="ECO:0007669"/>
    <property type="project" value="UniProtKB-KW"/>
</dbReference>
<dbReference type="FunFam" id="1.10.287.410:FF:000001">
    <property type="entry name" value="Carboxypeptidase Y"/>
    <property type="match status" value="1"/>
</dbReference>
<dbReference type="Gene3D" id="1.10.287.410">
    <property type="match status" value="1"/>
</dbReference>
<dbReference type="Gene3D" id="3.40.50.1820">
    <property type="entry name" value="alpha/beta hydrolase"/>
    <property type="match status" value="1"/>
</dbReference>
<dbReference type="InterPro" id="IPR029058">
    <property type="entry name" value="AB_hydrolase_fold"/>
</dbReference>
<dbReference type="InterPro" id="IPR001563">
    <property type="entry name" value="Peptidase_S10"/>
</dbReference>
<dbReference type="InterPro" id="IPR018202">
    <property type="entry name" value="Ser_caboxypep_ser_AS"/>
</dbReference>
<dbReference type="PANTHER" id="PTHR11802:SF113">
    <property type="entry name" value="SERINE CARBOXYPEPTIDASE CTSA-4.1"/>
    <property type="match status" value="1"/>
</dbReference>
<dbReference type="PANTHER" id="PTHR11802">
    <property type="entry name" value="SERINE PROTEASE FAMILY S10 SERINE CARBOXYPEPTIDASE"/>
    <property type="match status" value="1"/>
</dbReference>
<dbReference type="Pfam" id="PF00450">
    <property type="entry name" value="Peptidase_S10"/>
    <property type="match status" value="1"/>
</dbReference>
<dbReference type="PRINTS" id="PR00724">
    <property type="entry name" value="CRBOXYPTASEC"/>
</dbReference>
<dbReference type="SUPFAM" id="SSF53474">
    <property type="entry name" value="alpha/beta-Hydrolases"/>
    <property type="match status" value="1"/>
</dbReference>
<dbReference type="PROSITE" id="PS00131">
    <property type="entry name" value="CARBOXYPEPT_SER_SER"/>
    <property type="match status" value="1"/>
</dbReference>
<accession>D4DLI1</accession>
<reference key="1">
    <citation type="journal article" date="2011" name="Genome Biol.">
        <title>Comparative and functional genomics provide insights into the pathogenicity of dermatophytic fungi.</title>
        <authorList>
            <person name="Burmester A."/>
            <person name="Shelest E."/>
            <person name="Gloeckner G."/>
            <person name="Heddergott C."/>
            <person name="Schindler S."/>
            <person name="Staib P."/>
            <person name="Heidel A."/>
            <person name="Felder M."/>
            <person name="Petzold A."/>
            <person name="Szafranski K."/>
            <person name="Feuermann M."/>
            <person name="Pedruzzi I."/>
            <person name="Priebe S."/>
            <person name="Groth M."/>
            <person name="Winkler R."/>
            <person name="Li W."/>
            <person name="Kniemeyer O."/>
            <person name="Schroeckh V."/>
            <person name="Hertweck C."/>
            <person name="Hube B."/>
            <person name="White T.C."/>
            <person name="Platzer M."/>
            <person name="Guthke R."/>
            <person name="Heitman J."/>
            <person name="Woestemeyer J."/>
            <person name="Zipfel P.F."/>
            <person name="Monod M."/>
            <person name="Brakhage A.A."/>
        </authorList>
    </citation>
    <scope>NUCLEOTIDE SEQUENCE [LARGE SCALE GENOMIC DNA]</scope>
    <source>
        <strain>HKI 0517</strain>
    </source>
</reference>
<name>CBPYA_TRIVH</name>
<evidence type="ECO:0000250" key="1"/>
<evidence type="ECO:0000255" key="2"/>
<evidence type="ECO:0000255" key="3">
    <source>
        <dbReference type="PROSITE-ProRule" id="PRU10074"/>
    </source>
</evidence>
<evidence type="ECO:0000305" key="4"/>
<organism>
    <name type="scientific">Trichophyton verrucosum (strain HKI 0517)</name>
    <dbReference type="NCBI Taxonomy" id="663202"/>
    <lineage>
        <taxon>Eukaryota</taxon>
        <taxon>Fungi</taxon>
        <taxon>Dikarya</taxon>
        <taxon>Ascomycota</taxon>
        <taxon>Pezizomycotina</taxon>
        <taxon>Eurotiomycetes</taxon>
        <taxon>Eurotiomycetidae</taxon>
        <taxon>Onygenales</taxon>
        <taxon>Arthrodermataceae</taxon>
        <taxon>Trichophyton</taxon>
    </lineage>
</organism>
<keyword id="KW-0121">Carboxypeptidase</keyword>
<keyword id="KW-1015">Disulfide bond</keyword>
<keyword id="KW-0325">Glycoprotein</keyword>
<keyword id="KW-0378">Hydrolase</keyword>
<keyword id="KW-0645">Protease</keyword>
<keyword id="KW-0732">Signal</keyword>
<keyword id="KW-0926">Vacuole</keyword>
<keyword id="KW-0865">Zymogen</keyword>
<feature type="signal peptide" evidence="2">
    <location>
        <begin position="1"/>
        <end position="17"/>
    </location>
</feature>
<feature type="propeptide" id="PRO_0000407488" evidence="1">
    <location>
        <begin position="18"/>
        <end position="124"/>
    </location>
</feature>
<feature type="chain" id="PRO_0000407489" description="Carboxypeptidase Y homolog A">
    <location>
        <begin position="125"/>
        <end position="543"/>
    </location>
</feature>
<feature type="active site" evidence="3">
    <location>
        <position position="266"/>
    </location>
</feature>
<feature type="active site" evidence="3">
    <location>
        <position position="458"/>
    </location>
</feature>
<feature type="active site" evidence="3">
    <location>
        <position position="520"/>
    </location>
</feature>
<feature type="glycosylation site" description="N-linked (GlcNAc...) asparagine" evidence="2">
    <location>
        <position position="210"/>
    </location>
</feature>
<feature type="glycosylation site" description="N-linked (GlcNAc...) asparagine" evidence="2">
    <location>
        <position position="509"/>
    </location>
</feature>
<feature type="disulfide bond" evidence="1">
    <location>
        <begin position="179"/>
        <end position="419"/>
    </location>
</feature>
<feature type="disulfide bond" evidence="1">
    <location>
        <begin position="313"/>
        <end position="327"/>
    </location>
</feature>
<feature type="disulfide bond" evidence="1">
    <location>
        <begin position="337"/>
        <end position="360"/>
    </location>
</feature>
<feature type="disulfide bond" evidence="1">
    <location>
        <begin position="344"/>
        <end position="353"/>
    </location>
</feature>
<feature type="disulfide bond" evidence="1">
    <location>
        <begin position="382"/>
        <end position="389"/>
    </location>
</feature>
<protein>
    <recommendedName>
        <fullName>Carboxypeptidase Y homolog A</fullName>
        <ecNumber>3.4.16.5</ecNumber>
    </recommendedName>
</protein>
<comment type="function">
    <text evidence="1">Vacuolar carboxypeptidase involved in degradation of small peptides. Digests preferentially peptides containing an aliphatic or hydrophobic residue in P1' position, as well as methionine, leucine or phenylalanine in P1 position of ester substrate (By similarity).</text>
</comment>
<comment type="catalytic activity">
    <reaction evidence="3">
        <text>Release of a C-terminal amino acid with broad specificity.</text>
        <dbReference type="EC" id="3.4.16.5"/>
    </reaction>
</comment>
<comment type="subcellular location">
    <subcellularLocation>
        <location evidence="1">Vacuole</location>
    </subcellularLocation>
</comment>
<comment type="similarity">
    <text evidence="4">Belongs to the peptidase S10 family.</text>
</comment>